<organism>
    <name type="scientific">Saccharomyces cerevisiae (strain ATCC 204508 / S288c)</name>
    <name type="common">Baker's yeast</name>
    <dbReference type="NCBI Taxonomy" id="559292"/>
    <lineage>
        <taxon>Eukaryota</taxon>
        <taxon>Fungi</taxon>
        <taxon>Dikarya</taxon>
        <taxon>Ascomycota</taxon>
        <taxon>Saccharomycotina</taxon>
        <taxon>Saccharomycetes</taxon>
        <taxon>Saccharomycetales</taxon>
        <taxon>Saccharomycetaceae</taxon>
        <taxon>Saccharomyces</taxon>
    </lineage>
</organism>
<sequence>MSNYYRRAHASSGSYRQPQEQPQYSRSGHYQYSNGHSHQQYSSQYNQRRRYNHNDGTRRRYNDDRPHSSNNASTRQYYATNNSQSGPYVNKKSDISSRRGMSQSRYSNSNVHNTLASSSGSLPTESALLLQQRPPSVLRYNTDNLKSKFHYFDPIKGEFFNKDKMLSWKATDKEFSETGYYVVKELQDGQFKFKIKHRHPEIKASDPRNENGIMTSGKVATHRKCRNSLILLPRISYDRYSLGPPPSCEIVVYPAQDSTTTNIQDISIKNYFKKYGEISHFEAFNDPNSALPLHVYLIKYASSDGKINDAAKAAFSAVRKHESSGCFIMGFKFEVILNKHSILNNIISKFVEINVKKLQKLQENLKKAKEKEAENEKAKELQGKDITLPKEPKVDTLSHSSGSEKRIPYDLLGVVNNRPVLHVSKIFVAKHRFCVEDFKYKLRGYRCAKFIDHPTGIYIIFNDIAHAQTCSNAESGNLTIMSRSRRIPILIKFHLILPRFQNRTRFNKSSSSSNSTNVPIKYESKEEFIEATAKQILKDLEKTLHVDIKKRLIGPTVFDALDHANFPELLAKRELKEKEKRQQIASKIAEDELKRKEEAKRDFDLFGLYGGYAKSNKRNLKRHNSLALDHTSLKRKKLSNGIKPMAHLLNEETDSKETTPLNDEGITRVSKEHDEEDENMTSSSSEEEEEEAPDKKFKSESEPTTPESDHLHGIKPLVPDQNGSSDVLDASSMYKPTATEIPEPVYPPEEYDLKYSQTLSSMDLQNAIKDEEDMLILKQLLSTYTPTVTPETSAALEYKIWQSRRKVLEEEKASDWQIELNGTLFDSELQPGSSFKAEGFRKIADKLKINYLPHRRRVHQPLNTVNIHNERNEYTPELCQREESSNKEPSDSVPQEVSSSRDNRASNRRFQQDIEAQKAAIGTESELLSLNQLNKRKKPVMFARSAIHNWGLYALDSIAAKEMIIEYVGERIRQPVAEMREKRYLKNGIGSSYLFRVDENTVIDATKKGGIARFINHCCDPNCTAKIIKVGGRRRIVIYALRDIAASEELTYDYKFEREKDDEERLPCLCGAPNCKGFLN</sequence>
<gene>
    <name evidence="25" type="primary">SET1</name>
    <name evidence="24" type="synonym">KMT2</name>
    <name type="synonym">YTX1</name>
    <name type="ordered locus">YHR119W</name>
</gene>
<accession>P38827</accession>
<accession>D3DL69</accession>
<comment type="function">
    <text evidence="5 6 7 8 9 10 11 12 14 15 16 17 18 19 20 21">Catalytic component of the COMPASS (Set1C) complex that specifically mono-, di- and trimethylates histone H3 to form H3K4me1/2/3 (PubMed:11742990, PubMed:11751634, PubMed:11752412, PubMed:11805083, PubMed:11818070, PubMed:12060701, PubMed:12353038, PubMed:12845608, PubMed:14636589, PubMed:15949446, PubMed:29071121). Binds RNAs involved in chromosome segregation, splicing and transcriptional regulation; appears to bind transcripts both co- and post-transcriptionally and binding might negatively affect its histone methyltransferase activity (PubMed:16787775, PubMed:29071121). COMPASS recognizes ubiquitinated H2B on one face of the nucleosome which stimulates the methylation of H3 on the opposing face (PubMed:31922488). Plays a role in telomere length maintenance and transcription elongation regulation (PubMed:11742990, PubMed:11751634, PubMed:11805083, PubMed:11818070, PubMed:14636589, PubMed:15949446, PubMed:9398665, PubMed:9988274).</text>
</comment>
<comment type="catalytic activity">
    <reaction evidence="8 26">
        <text>L-lysyl(4)-[histone H3] + 3 S-adenosyl-L-methionine = N(6),N(6),N(6)-trimethyl-L-lysyl(4)-[histone H3] + 3 S-adenosyl-L-homocysteine + 3 H(+)</text>
        <dbReference type="Rhea" id="RHEA:60260"/>
        <dbReference type="Rhea" id="RHEA-COMP:15537"/>
        <dbReference type="Rhea" id="RHEA-COMP:15547"/>
        <dbReference type="ChEBI" id="CHEBI:15378"/>
        <dbReference type="ChEBI" id="CHEBI:29969"/>
        <dbReference type="ChEBI" id="CHEBI:57856"/>
        <dbReference type="ChEBI" id="CHEBI:59789"/>
        <dbReference type="ChEBI" id="CHEBI:61961"/>
        <dbReference type="EC" id="2.1.1.354"/>
    </reaction>
</comment>
<comment type="catalytic activity">
    <reaction evidence="11 26">
        <text>N(6)-methyl-L-lysyl(4)-[histone H3] + S-adenosyl-L-methionine = N(6),N(6)-dimethyl-L-lysyl(4)-[histone H3] + S-adenosyl-L-homocysteine + H(+)</text>
        <dbReference type="Rhea" id="RHEA:60268"/>
        <dbReference type="Rhea" id="RHEA-COMP:15540"/>
        <dbReference type="Rhea" id="RHEA-COMP:15543"/>
        <dbReference type="ChEBI" id="CHEBI:15378"/>
        <dbReference type="ChEBI" id="CHEBI:57856"/>
        <dbReference type="ChEBI" id="CHEBI:59789"/>
        <dbReference type="ChEBI" id="CHEBI:61929"/>
        <dbReference type="ChEBI" id="CHEBI:61976"/>
    </reaction>
</comment>
<comment type="catalytic activity">
    <reaction evidence="11 26">
        <text>N(6),N(6)-dimethyl-L-lysyl(4)-[histone H3] + S-adenosyl-L-methionine = N(6),N(6),N(6)-trimethyl-L-lysyl(4)-[histone H3] + S-adenosyl-L-homocysteine + H(+)</text>
        <dbReference type="Rhea" id="RHEA:60272"/>
        <dbReference type="Rhea" id="RHEA-COMP:15537"/>
        <dbReference type="Rhea" id="RHEA-COMP:15540"/>
        <dbReference type="ChEBI" id="CHEBI:15378"/>
        <dbReference type="ChEBI" id="CHEBI:57856"/>
        <dbReference type="ChEBI" id="CHEBI:59789"/>
        <dbReference type="ChEBI" id="CHEBI:61961"/>
        <dbReference type="ChEBI" id="CHEBI:61976"/>
    </reaction>
</comment>
<comment type="subunit">
    <text evidence="4 5 7 16 18 19 21">Component of the Set1C/COMPASS complex which consists of SET1(2), BRE2(2), SPP1(2), SDC1(1), SHG1(1), SWD1(1), SWD2(1), and SWD3(1) (PubMed:11687631, PubMed:11742990, PubMed:11752412, PubMed:16787775, PubMed:29071121, PubMed:31922488). Interacts with MEC3 (PubMed:9988274).</text>
</comment>
<comment type="interaction">
    <interactant intactId="EBI-16977">
        <id>P38827</id>
    </interactant>
    <interactant intactId="EBI-27115">
        <id>P43132</id>
        <label>BRE2</label>
    </interactant>
    <organismsDiffer>false</organismsDiffer>
    <experiments>8</experiments>
</comment>
<comment type="interaction">
    <interactant intactId="EBI-16977">
        <id>P38827</id>
    </interactant>
    <interactant intactId="EBI-10658">
        <id>Q02574</id>
        <label>MEC3</label>
    </interactant>
    <organismsDiffer>false</organismsDiffer>
    <experiments>3</experiments>
</comment>
<comment type="interaction">
    <interactant intactId="EBI-16977">
        <id>P38827</id>
    </interactant>
    <interactant intactId="EBI-21106">
        <id>P38337</id>
        <label>SHG1</label>
    </interactant>
    <organismsDiffer>false</organismsDiffer>
    <experiments>6</experiments>
</comment>
<comment type="interaction">
    <interactant intactId="EBI-16977">
        <id>P38827</id>
    </interactant>
    <interactant intactId="EBI-8637">
        <id>P0CS90</id>
        <label>SSC1</label>
    </interactant>
    <organismsDiffer>false</organismsDiffer>
    <experiments>2</experiments>
</comment>
<comment type="interaction">
    <interactant intactId="EBI-16977">
        <id>P38827</id>
    </interactant>
    <interactant intactId="EBI-26608">
        <id>P36104</id>
        <label>SWD2</label>
    </interactant>
    <organismsDiffer>false</organismsDiffer>
    <experiments>7</experiments>
</comment>
<comment type="subcellular location">
    <subcellularLocation>
        <location evidence="18">Nucleus</location>
    </subcellularLocation>
    <subcellularLocation>
        <location evidence="18">Chromosome</location>
    </subcellularLocation>
    <text evidence="18">Localizes to the 5' region of active genes transcribed by RNAPII.</text>
</comment>
<comment type="domain">
    <text evidence="19">The RxxxRR motif forms an adapter helix that bridges the nucleosome acidic patch and ubiquitin from ubiquitinated histone H2B which is critical for COMPASS activity.</text>
</comment>
<comment type="disruption phenotype">
    <text evidence="18">Abolishes cellular H3K4 mono-, di- and trimethylation (PubMed:29071121). Increases the frequency of Ty1 retrotransposition (PubMed:29071121).</text>
</comment>
<comment type="miscellaneous">
    <text evidence="13">Present with 172 molecules/cell in log phase SD medium.</text>
</comment>
<comment type="similarity">
    <text evidence="2">Belongs to the class V-like SAM-binding methyltransferase superfamily.</text>
</comment>
<dbReference type="EC" id="2.1.1.354" evidence="8 26"/>
<dbReference type="EMBL" id="U00059">
    <property type="protein sequence ID" value="AAB68867.1"/>
    <property type="molecule type" value="Genomic_DNA"/>
</dbReference>
<dbReference type="EMBL" id="BK006934">
    <property type="protein sequence ID" value="DAA06813.1"/>
    <property type="molecule type" value="Genomic_DNA"/>
</dbReference>
<dbReference type="PIR" id="S48961">
    <property type="entry name" value="S48961"/>
</dbReference>
<dbReference type="RefSeq" id="NP_011987.1">
    <property type="nucleotide sequence ID" value="NM_001179249.1"/>
</dbReference>
<dbReference type="PDB" id="2J8A">
    <property type="method" value="X-ray"/>
    <property type="resolution" value="3.00 A"/>
    <property type="chains" value="A=247-375"/>
</dbReference>
<dbReference type="PDB" id="6VEN">
    <property type="method" value="EM"/>
    <property type="resolution" value="3.37 A"/>
    <property type="chains" value="N=762-1080"/>
</dbReference>
<dbReference type="PDBsum" id="2J8A"/>
<dbReference type="PDBsum" id="6VEN"/>
<dbReference type="EMDB" id="EMD-21157"/>
<dbReference type="SMR" id="P38827"/>
<dbReference type="BioGRID" id="36552">
    <property type="interactions" value="500"/>
</dbReference>
<dbReference type="ComplexPortal" id="CPX-1039">
    <property type="entry name" value="COMPASS complex"/>
</dbReference>
<dbReference type="DIP" id="DIP-4616N"/>
<dbReference type="ELM" id="P38827"/>
<dbReference type="FunCoup" id="P38827">
    <property type="interactions" value="196"/>
</dbReference>
<dbReference type="IntAct" id="P38827">
    <property type="interactions" value="38"/>
</dbReference>
<dbReference type="MINT" id="P38827"/>
<dbReference type="STRING" id="4932.YHR119W"/>
<dbReference type="GlyGen" id="P38827">
    <property type="glycosylation" value="1 site"/>
</dbReference>
<dbReference type="iPTMnet" id="P38827"/>
<dbReference type="PaxDb" id="4932-YHR119W"/>
<dbReference type="PeptideAtlas" id="P38827"/>
<dbReference type="EnsemblFungi" id="YHR119W_mRNA">
    <property type="protein sequence ID" value="YHR119W"/>
    <property type="gene ID" value="YHR119W"/>
</dbReference>
<dbReference type="GeneID" id="856519"/>
<dbReference type="KEGG" id="sce:YHR119W"/>
<dbReference type="AGR" id="SGD:S000001161"/>
<dbReference type="SGD" id="S000001161">
    <property type="gene designation" value="SET1"/>
</dbReference>
<dbReference type="VEuPathDB" id="FungiDB:YHR119W"/>
<dbReference type="eggNOG" id="KOG1080">
    <property type="taxonomic scope" value="Eukaryota"/>
</dbReference>
<dbReference type="GeneTree" id="ENSGT00940000169211"/>
<dbReference type="HOGENOM" id="CLU_004391_1_0_1"/>
<dbReference type="InParanoid" id="P38827"/>
<dbReference type="OMA" id="ERLPCLC"/>
<dbReference type="OrthoDB" id="308383at2759"/>
<dbReference type="BioCyc" id="YEAST:G3O-31161-MONOMER"/>
<dbReference type="Reactome" id="R-SCE-3214841">
    <property type="pathway name" value="PKMTs methylate histone lysines"/>
</dbReference>
<dbReference type="Reactome" id="R-SCE-9772755">
    <property type="pathway name" value="Formation of WDR5-containing histone-modifying complexes"/>
</dbReference>
<dbReference type="BioGRID-ORCS" id="856519">
    <property type="hits" value="0 hits in 10 CRISPR screens"/>
</dbReference>
<dbReference type="EvolutionaryTrace" id="P38827"/>
<dbReference type="PRO" id="PR:P38827"/>
<dbReference type="Proteomes" id="UP000002311">
    <property type="component" value="Chromosome VIII"/>
</dbReference>
<dbReference type="RNAct" id="P38827">
    <property type="molecule type" value="protein"/>
</dbReference>
<dbReference type="GO" id="GO:0000781">
    <property type="term" value="C:chromosome, telomeric region"/>
    <property type="evidence" value="ECO:0000316"/>
    <property type="project" value="ARUK-UCL"/>
</dbReference>
<dbReference type="GO" id="GO:0005634">
    <property type="term" value="C:nucleus"/>
    <property type="evidence" value="ECO:0000303"/>
    <property type="project" value="ComplexPortal"/>
</dbReference>
<dbReference type="GO" id="GO:0048188">
    <property type="term" value="C:Set1C/COMPASS complex"/>
    <property type="evidence" value="ECO:0000314"/>
    <property type="project" value="UniProtKB"/>
</dbReference>
<dbReference type="GO" id="GO:0042800">
    <property type="term" value="F:histone H3K4 methyltransferase activity"/>
    <property type="evidence" value="ECO:0000315"/>
    <property type="project" value="CACAO"/>
</dbReference>
<dbReference type="GO" id="GO:0140999">
    <property type="term" value="F:histone H3K4 trimethyltransferase activity"/>
    <property type="evidence" value="ECO:0007669"/>
    <property type="project" value="UniProtKB-EC"/>
</dbReference>
<dbReference type="GO" id="GO:0016279">
    <property type="term" value="F:protein-lysine N-methyltransferase activity"/>
    <property type="evidence" value="ECO:0000315"/>
    <property type="project" value="SGD"/>
</dbReference>
<dbReference type="GO" id="GO:0003723">
    <property type="term" value="F:RNA binding"/>
    <property type="evidence" value="ECO:0000314"/>
    <property type="project" value="UniProtKB"/>
</dbReference>
<dbReference type="GO" id="GO:0030437">
    <property type="term" value="P:ascospore formation"/>
    <property type="evidence" value="ECO:0000315"/>
    <property type="project" value="SGD"/>
</dbReference>
<dbReference type="GO" id="GO:0033554">
    <property type="term" value="P:cellular response to stress"/>
    <property type="evidence" value="ECO:0000315"/>
    <property type="project" value="SGD"/>
</dbReference>
<dbReference type="GO" id="GO:0042138">
    <property type="term" value="P:meiotic DNA double-strand break formation"/>
    <property type="evidence" value="ECO:0000315"/>
    <property type="project" value="SGD"/>
</dbReference>
<dbReference type="GO" id="GO:0010629">
    <property type="term" value="P:negative regulation of gene expression"/>
    <property type="evidence" value="ECO:0000315"/>
    <property type="project" value="CACAO"/>
</dbReference>
<dbReference type="GO" id="GO:0000122">
    <property type="term" value="P:negative regulation of transcription by RNA polymerase II"/>
    <property type="evidence" value="ECO:0000315"/>
    <property type="project" value="SGD"/>
</dbReference>
<dbReference type="GO" id="GO:1905088">
    <property type="term" value="P:positive regulation of synaptonemal complex assembly"/>
    <property type="evidence" value="ECO:0000315"/>
    <property type="project" value="CACAO"/>
</dbReference>
<dbReference type="GO" id="GO:0045944">
    <property type="term" value="P:positive regulation of transcription by RNA polymerase II"/>
    <property type="evidence" value="ECO:0000315"/>
    <property type="project" value="SGD"/>
</dbReference>
<dbReference type="GO" id="GO:0006479">
    <property type="term" value="P:protein methylation"/>
    <property type="evidence" value="ECO:0000315"/>
    <property type="project" value="CACAO"/>
</dbReference>
<dbReference type="GO" id="GO:0000183">
    <property type="term" value="P:rDNA heterochromatin formation"/>
    <property type="evidence" value="ECO:0000315"/>
    <property type="project" value="CACAO"/>
</dbReference>
<dbReference type="GO" id="GO:1902275">
    <property type="term" value="P:regulation of chromatin organization"/>
    <property type="evidence" value="ECO:0000315"/>
    <property type="project" value="SGD"/>
</dbReference>
<dbReference type="GO" id="GO:1903341">
    <property type="term" value="P:regulation of meiotic DNA double-strand break formation"/>
    <property type="evidence" value="ECO:0000315"/>
    <property type="project" value="SGD"/>
</dbReference>
<dbReference type="GO" id="GO:0006357">
    <property type="term" value="P:regulation of transcription by RNA polymerase II"/>
    <property type="evidence" value="ECO:0000315"/>
    <property type="project" value="SGD"/>
</dbReference>
<dbReference type="GO" id="GO:0030466">
    <property type="term" value="P:silent mating-type cassette heterochromatin formation"/>
    <property type="evidence" value="ECO:0000315"/>
    <property type="project" value="SGD"/>
</dbReference>
<dbReference type="GO" id="GO:0055092">
    <property type="term" value="P:sterol homeostasis"/>
    <property type="evidence" value="ECO:0000315"/>
    <property type="project" value="CACAO"/>
</dbReference>
<dbReference type="GO" id="GO:0031509">
    <property type="term" value="P:subtelomeric heterochromatin formation"/>
    <property type="evidence" value="ECO:0000315"/>
    <property type="project" value="SGD"/>
</dbReference>
<dbReference type="GO" id="GO:0007130">
    <property type="term" value="P:synaptonemal complex assembly"/>
    <property type="evidence" value="ECO:0000315"/>
    <property type="project" value="CACAO"/>
</dbReference>
<dbReference type="GO" id="GO:0000723">
    <property type="term" value="P:telomere maintenance"/>
    <property type="evidence" value="ECO:0000315"/>
    <property type="project" value="SGD"/>
</dbReference>
<dbReference type="CDD" id="cd12302">
    <property type="entry name" value="RRM_scSet1p_like"/>
    <property type="match status" value="1"/>
</dbReference>
<dbReference type="CDD" id="cd20072">
    <property type="entry name" value="SET_SET1"/>
    <property type="match status" value="1"/>
</dbReference>
<dbReference type="FunFam" id="2.170.270.10:FF:000056">
    <property type="entry name" value="Histone-lysine N-methyltransferase, H3 lysine-4 specific"/>
    <property type="match status" value="1"/>
</dbReference>
<dbReference type="Gene3D" id="3.30.70.330">
    <property type="match status" value="1"/>
</dbReference>
<dbReference type="Gene3D" id="2.170.270.10">
    <property type="entry name" value="SET domain"/>
    <property type="match status" value="1"/>
</dbReference>
<dbReference type="InterPro" id="IPR024657">
    <property type="entry name" value="COMPASS_Set1_N-SET"/>
</dbReference>
<dbReference type="InterPro" id="IPR012677">
    <property type="entry name" value="Nucleotide-bd_a/b_plait_sf"/>
</dbReference>
<dbReference type="InterPro" id="IPR003616">
    <property type="entry name" value="Post-SET_dom"/>
</dbReference>
<dbReference type="InterPro" id="IPR044570">
    <property type="entry name" value="Set1-like"/>
</dbReference>
<dbReference type="InterPro" id="IPR017111">
    <property type="entry name" value="Set1_fungi"/>
</dbReference>
<dbReference type="InterPro" id="IPR048669">
    <property type="entry name" value="SET1_RBD"/>
</dbReference>
<dbReference type="InterPro" id="IPR024636">
    <property type="entry name" value="SET_assoc"/>
</dbReference>
<dbReference type="InterPro" id="IPR001214">
    <property type="entry name" value="SET_dom"/>
</dbReference>
<dbReference type="InterPro" id="IPR046341">
    <property type="entry name" value="SET_dom_sf"/>
</dbReference>
<dbReference type="PANTHER" id="PTHR45814">
    <property type="entry name" value="HISTONE-LYSINE N-METHYLTRANSFERASE SETD1"/>
    <property type="match status" value="1"/>
</dbReference>
<dbReference type="PANTHER" id="PTHR45814:SF2">
    <property type="entry name" value="HISTONE-LYSINE N-METHYLTRANSFERASE SETD1"/>
    <property type="match status" value="1"/>
</dbReference>
<dbReference type="Pfam" id="PF11764">
    <property type="entry name" value="N-SET"/>
    <property type="match status" value="1"/>
</dbReference>
<dbReference type="Pfam" id="PF00856">
    <property type="entry name" value="SET"/>
    <property type="match status" value="1"/>
</dbReference>
<dbReference type="Pfam" id="PF21569">
    <property type="entry name" value="SET1_RBD"/>
    <property type="match status" value="1"/>
</dbReference>
<dbReference type="Pfam" id="PF11767">
    <property type="entry name" value="SET_assoc"/>
    <property type="match status" value="1"/>
</dbReference>
<dbReference type="PIRSF" id="PIRSF037104">
    <property type="entry name" value="Histone_H3-K4_mtfrase_Set1_fun"/>
    <property type="match status" value="1"/>
</dbReference>
<dbReference type="SMART" id="SM01291">
    <property type="entry name" value="N-SET"/>
    <property type="match status" value="1"/>
</dbReference>
<dbReference type="SMART" id="SM00508">
    <property type="entry name" value="PostSET"/>
    <property type="match status" value="1"/>
</dbReference>
<dbReference type="SMART" id="SM00317">
    <property type="entry name" value="SET"/>
    <property type="match status" value="1"/>
</dbReference>
<dbReference type="SUPFAM" id="SSF82199">
    <property type="entry name" value="SET domain"/>
    <property type="match status" value="1"/>
</dbReference>
<dbReference type="PROSITE" id="PS50868">
    <property type="entry name" value="POST_SET"/>
    <property type="match status" value="1"/>
</dbReference>
<dbReference type="PROSITE" id="PS51572">
    <property type="entry name" value="SAM_MT43_1"/>
    <property type="match status" value="1"/>
</dbReference>
<dbReference type="PROSITE" id="PS50280">
    <property type="entry name" value="SET"/>
    <property type="match status" value="1"/>
</dbReference>
<keyword id="KW-0002">3D-structure</keyword>
<keyword id="KW-0156">Chromatin regulator</keyword>
<keyword id="KW-0158">Chromosome</keyword>
<keyword id="KW-0489">Methyltransferase</keyword>
<keyword id="KW-0539">Nucleus</keyword>
<keyword id="KW-0597">Phosphoprotein</keyword>
<keyword id="KW-1185">Reference proteome</keyword>
<keyword id="KW-0949">S-adenosyl-L-methionine</keyword>
<keyword id="KW-0808">Transferase</keyword>
<evidence type="ECO:0000255" key="1">
    <source>
        <dbReference type="PROSITE-ProRule" id="PRU00155"/>
    </source>
</evidence>
<evidence type="ECO:0000255" key="2">
    <source>
        <dbReference type="PROSITE-ProRule" id="PRU00190"/>
    </source>
</evidence>
<evidence type="ECO:0000256" key="3">
    <source>
        <dbReference type="SAM" id="MobiDB-lite"/>
    </source>
</evidence>
<evidence type="ECO:0000269" key="4">
    <source>
    </source>
</evidence>
<evidence type="ECO:0000269" key="5">
    <source>
    </source>
</evidence>
<evidence type="ECO:0000269" key="6">
    <source>
    </source>
</evidence>
<evidence type="ECO:0000269" key="7">
    <source>
    </source>
</evidence>
<evidence type="ECO:0000269" key="8">
    <source>
    </source>
</evidence>
<evidence type="ECO:0000269" key="9">
    <source>
    </source>
</evidence>
<evidence type="ECO:0000269" key="10">
    <source>
    </source>
</evidence>
<evidence type="ECO:0000269" key="11">
    <source>
    </source>
</evidence>
<evidence type="ECO:0000269" key="12">
    <source>
    </source>
</evidence>
<evidence type="ECO:0000269" key="13">
    <source>
    </source>
</evidence>
<evidence type="ECO:0000269" key="14">
    <source>
    </source>
</evidence>
<evidence type="ECO:0000269" key="15">
    <source>
    </source>
</evidence>
<evidence type="ECO:0000269" key="16">
    <source>
    </source>
</evidence>
<evidence type="ECO:0000269" key="17">
    <source>
    </source>
</evidence>
<evidence type="ECO:0000269" key="18">
    <source>
    </source>
</evidence>
<evidence type="ECO:0000269" key="19">
    <source>
    </source>
</evidence>
<evidence type="ECO:0000269" key="20">
    <source>
    </source>
</evidence>
<evidence type="ECO:0000269" key="21">
    <source>
    </source>
</evidence>
<evidence type="ECO:0000303" key="22">
    <source>
    </source>
</evidence>
<evidence type="ECO:0000303" key="23">
    <source>
    </source>
</evidence>
<evidence type="ECO:0000303" key="24">
    <source>
    </source>
</evidence>
<evidence type="ECO:0000303" key="25">
    <source>
    </source>
</evidence>
<evidence type="ECO:0000305" key="26">
    <source>
    </source>
</evidence>
<evidence type="ECO:0007744" key="27">
    <source>
        <dbReference type="PDB" id="2J8A"/>
    </source>
</evidence>
<evidence type="ECO:0007744" key="28">
    <source>
        <dbReference type="PDB" id="6VEN"/>
    </source>
</evidence>
<evidence type="ECO:0007744" key="29">
    <source>
    </source>
</evidence>
<evidence type="ECO:0007744" key="30">
    <source>
    </source>
</evidence>
<evidence type="ECO:0007829" key="31">
    <source>
        <dbReference type="PDB" id="2J8A"/>
    </source>
</evidence>
<evidence type="ECO:0007829" key="32">
    <source>
        <dbReference type="PDB" id="6VEN"/>
    </source>
</evidence>
<protein>
    <recommendedName>
        <fullName evidence="23">Histone-lysine N-methyltransferase, H3 lysine-4 specific</fullName>
        <ecNumber evidence="8 26">2.1.1.354</ecNumber>
    </recommendedName>
    <alternativeName>
        <fullName evidence="22">COMPASS component SET1</fullName>
    </alternativeName>
    <alternativeName>
        <fullName>Lysine N-methyltransferase 2</fullName>
    </alternativeName>
    <alternativeName>
        <fullName evidence="22">SET domain-containing protein 1</fullName>
    </alternativeName>
</protein>
<name>SET1_YEAST</name>
<proteinExistence type="evidence at protein level"/>
<reference key="1">
    <citation type="journal article" date="1994" name="Science">
        <title>Complete nucleotide sequence of Saccharomyces cerevisiae chromosome VIII.</title>
        <authorList>
            <person name="Johnston M."/>
            <person name="Andrews S."/>
            <person name="Brinkman R."/>
            <person name="Cooper J."/>
            <person name="Ding H."/>
            <person name="Dover J."/>
            <person name="Du Z."/>
            <person name="Favello A."/>
            <person name="Fulton L."/>
            <person name="Gattung S."/>
            <person name="Geisel C."/>
            <person name="Kirsten J."/>
            <person name="Kucaba T."/>
            <person name="Hillier L.W."/>
            <person name="Jier M."/>
            <person name="Johnston L."/>
            <person name="Langston Y."/>
            <person name="Latreille P."/>
            <person name="Louis E.J."/>
            <person name="Macri C."/>
            <person name="Mardis E."/>
            <person name="Menezes S."/>
            <person name="Mouser L."/>
            <person name="Nhan M."/>
            <person name="Rifkin L."/>
            <person name="Riles L."/>
            <person name="St Peter H."/>
            <person name="Trevaskis E."/>
            <person name="Vaughan K."/>
            <person name="Vignati D."/>
            <person name="Wilcox L."/>
            <person name="Wohldman P."/>
            <person name="Waterston R."/>
            <person name="Wilson R."/>
            <person name="Vaudin M."/>
        </authorList>
    </citation>
    <scope>NUCLEOTIDE SEQUENCE [LARGE SCALE GENOMIC DNA]</scope>
    <source>
        <strain>ATCC 204508 / S288c</strain>
    </source>
</reference>
<reference key="2">
    <citation type="journal article" date="2014" name="G3 (Bethesda)">
        <title>The reference genome sequence of Saccharomyces cerevisiae: Then and now.</title>
        <authorList>
            <person name="Engel S.R."/>
            <person name="Dietrich F.S."/>
            <person name="Fisk D.G."/>
            <person name="Binkley G."/>
            <person name="Balakrishnan R."/>
            <person name="Costanzo M.C."/>
            <person name="Dwight S.S."/>
            <person name="Hitz B.C."/>
            <person name="Karra K."/>
            <person name="Nash R.S."/>
            <person name="Weng S."/>
            <person name="Wong E.D."/>
            <person name="Lloyd P."/>
            <person name="Skrzypek M.S."/>
            <person name="Miyasato S.R."/>
            <person name="Simison M."/>
            <person name="Cherry J.M."/>
        </authorList>
    </citation>
    <scope>GENOME REANNOTATION</scope>
    <source>
        <strain>ATCC 204508 / S288c</strain>
    </source>
</reference>
<reference key="3">
    <citation type="journal article" date="1997" name="Mol. Biol. Cell">
        <title>SET1, a yeast member of the Trithorax family, functions in transcriptional silencing and diverse cellular processes.</title>
        <authorList>
            <person name="Nislow C."/>
            <person name="Ray E."/>
            <person name="Pillus L."/>
        </authorList>
    </citation>
    <scope>FUNCTION</scope>
</reference>
<reference key="4">
    <citation type="journal article" date="1999" name="Nat. Genet.">
        <title>Interaction between Set1p and checkpoint protein Mec3p in DNA repair and telomere functions.</title>
        <authorList>
            <person name="Corda Y."/>
            <person name="Schramke V."/>
            <person name="Longhese M.P."/>
            <person name="Smokvina T."/>
            <person name="Paciotti V."/>
            <person name="Brevet V."/>
            <person name="Gilson E."/>
            <person name="Geli V."/>
        </authorList>
    </citation>
    <scope>FUNCTION</scope>
    <scope>INTERACTION WITH MEC3</scope>
</reference>
<reference key="5">
    <citation type="journal article" date="2001" name="EMBO J.">
        <title>The Saccharomyces cerevisiae Set1 complex includes an Ash2 homologue and methylates histone 3 lysine 4.</title>
        <authorList>
            <person name="Roguev A."/>
            <person name="Schaft D."/>
            <person name="Shevchenko A."/>
            <person name="Pijnappel W.W.M.P."/>
            <person name="Wilm M."/>
            <person name="Aasland R."/>
            <person name="Stewart A.F."/>
        </authorList>
    </citation>
    <scope>IDENTIFICATION IN THE SET1C/COMPASS COMPLEX</scope>
    <scope>FUNCTION OF THE SET1 COMPLEX</scope>
</reference>
<reference key="6">
    <citation type="journal article" date="2001" name="Genes Dev.">
        <title>Histone H3 lysine 4 methylation is mediated by Set1 and required for cell growth and rDNA silencing in Saccharomyces cerevisiae.</title>
        <authorList>
            <person name="Briggs S.D."/>
            <person name="Bryk M."/>
            <person name="Strahl B.D."/>
            <person name="Cheung W.L."/>
            <person name="Davie J.K."/>
            <person name="Dent S.Y.R."/>
            <person name="Winston F."/>
            <person name="Allis C.D."/>
        </authorList>
    </citation>
    <scope>FUNCTION</scope>
</reference>
<reference key="7">
    <citation type="journal article" date="2001" name="Proc. Natl. Acad. Sci. U.S.A.">
        <title>COMPASS: a complex of proteins associated with a trithorax-related SET domain protein.</title>
        <authorList>
            <person name="Miller T."/>
            <person name="Krogan N.J."/>
            <person name="Dover J."/>
            <person name="Erdjument-Bromage H."/>
            <person name="Tempst P."/>
            <person name="Johnston M."/>
            <person name="Greenblatt J.F."/>
            <person name="Shilatifard A."/>
        </authorList>
    </citation>
    <scope>SUBUNIT</scope>
</reference>
<reference key="8">
    <citation type="journal article" date="2002" name="Curr. Biol.">
        <title>Evidence that Set1, a factor required for methylation of histone H3, regulates rDNA silencing in S. cerevisiae by a Sir2-independent mechanism.</title>
        <authorList>
            <person name="Bryk M."/>
            <person name="Briggs S.D."/>
            <person name="Strahl B.D."/>
            <person name="Curcio M.J."/>
            <person name="Allis C.D."/>
            <person name="Winston F."/>
        </authorList>
    </citation>
    <scope>FUNCTION</scope>
</reference>
<reference key="9">
    <citation type="journal article" date="2002" name="J. Biol. Chem.">
        <title>COMPASS, a histone H3 (Lysine 4) methyltransferase required for telomeric silencing of gene expression.</title>
        <authorList>
            <person name="Krogan N.J."/>
            <person name="Dover J."/>
            <person name="Khorrami S."/>
            <person name="Greenblatt J.F."/>
            <person name="Schneider J."/>
            <person name="Johnston M."/>
            <person name="Shilatifard A."/>
        </authorList>
    </citation>
    <scope>CATALYTIC ACTIVITY</scope>
    <scope>FUNCTION</scope>
</reference>
<reference key="10">
    <citation type="journal article" date="2002" name="Nature">
        <title>Active genes are tri-methylated at K4 of histone H3.</title>
        <authorList>
            <person name="Santos-Rosa H."/>
            <person name="Schneider R."/>
            <person name="Bannister A.J."/>
            <person name="Sherriff J."/>
            <person name="Bernstein B.E."/>
            <person name="Emre N.C.T."/>
            <person name="Schreiber S.L."/>
            <person name="Mellor J."/>
            <person name="Kouzarides T."/>
        </authorList>
    </citation>
    <scope>FUNCTION</scope>
</reference>
<reference key="11">
    <citation type="journal article" date="2002" name="Proc. Natl. Acad. Sci. U.S.A.">
        <title>A trithorax-group complex purified from Saccharomyces cerevisiae is required for methylation of histone H3.</title>
        <authorList>
            <person name="Nagy P.L."/>
            <person name="Griesenbeck J."/>
            <person name="Kornberg R.D."/>
            <person name="Cleary M.L."/>
        </authorList>
    </citation>
    <scope>IDENTIFICATION IN THE SET1C/COMPASS COMPLEX</scope>
    <scope>FUNCTION OF THE SET1 COMPLEX</scope>
</reference>
<reference key="12">
    <citation type="journal article" date="2002" name="Proc. Natl. Acad. Sci. U.S.A.">
        <title>Methylation of histone H3 Lys 4 in coding regions of active genes.</title>
        <authorList>
            <person name="Bernstein B.E."/>
            <person name="Humphrey E.L."/>
            <person name="Erlich R.L."/>
            <person name="Schneider R."/>
            <person name="Bouman P."/>
            <person name="Liu J.S."/>
            <person name="Kouzarides T."/>
            <person name="Schreiber S.L."/>
        </authorList>
    </citation>
    <scope>FUNCTION</scope>
</reference>
<reference key="13">
    <citation type="journal article" date="2003" name="Mol. Cell">
        <title>Methylation of histone H3 K4 mediates association of the Isw1p ATPase with chromatin.</title>
        <authorList>
            <person name="Santos-Rosa H."/>
            <person name="Schneider R."/>
            <person name="Bernstein B.E."/>
            <person name="Karabetsou N."/>
            <person name="Morillon A."/>
            <person name="Weise C."/>
            <person name="Schreiber S.L."/>
            <person name="Mellor J."/>
            <person name="Kouzarides T."/>
        </authorList>
    </citation>
    <scope>FUNCTION</scope>
</reference>
<reference key="14">
    <citation type="journal article" date="2018" name="Mol. Cell">
        <authorList>
            <person name="Santos-Rosa H."/>
            <person name="Schneider R."/>
            <person name="Bernstein B.E."/>
            <person name="Karabetsou N."/>
            <person name="Morillon A."/>
            <person name="Weise C."/>
            <person name="Schreiber S.L."/>
            <person name="Mellor J."/>
            <person name="Kouzarides T."/>
        </authorList>
    </citation>
    <scope>ERRATUM OF PUBMED:14636589</scope>
</reference>
<reference key="15">
    <citation type="journal article" date="2003" name="Nature">
        <title>Global analysis of protein expression in yeast.</title>
        <authorList>
            <person name="Ghaemmaghami S."/>
            <person name="Huh W.-K."/>
            <person name="Bower K."/>
            <person name="Howson R.W."/>
            <person name="Belle A."/>
            <person name="Dephoure N."/>
            <person name="O'Shea E.K."/>
            <person name="Weissman J.S."/>
        </authorList>
    </citation>
    <scope>LEVEL OF PROTEIN EXPRESSION [LARGE SCALE ANALYSIS]</scope>
</reference>
<reference key="16">
    <citation type="journal article" date="2003" name="Yeast">
        <title>Saccharomyces cerevisiae Set1p is a methyltransferase specific for lysine 4 of histone H3 and is required for efficient gene expression.</title>
        <authorList>
            <person name="Boa S."/>
            <person name="Coert C."/>
            <person name="Patterton H.-G."/>
        </authorList>
    </citation>
    <scope>FUNCTION</scope>
</reference>
<reference key="17">
    <citation type="journal article" date="2005" name="Mol. Cell">
        <title>Dynamic lysine methylation on histone H3 defines the regulatory phase of gene transcription.</title>
        <authorList>
            <person name="Morillon A."/>
            <person name="Karabetsou N."/>
            <person name="Nair A."/>
            <person name="Mellor J."/>
        </authorList>
    </citation>
    <scope>FUNCTION OF THE COMPASS COMPLEX</scope>
</reference>
<reference key="18">
    <citation type="journal article" date="2007" name="Cell">
        <title>New nomenclature for chromatin-modifying enzymes.</title>
        <authorList>
            <person name="Allis C.D."/>
            <person name="Berger S.L."/>
            <person name="Cote J."/>
            <person name="Dent S."/>
            <person name="Jenuwien T."/>
            <person name="Kouzarides T."/>
            <person name="Pillus L."/>
            <person name="Reinberg D."/>
            <person name="Shi Y."/>
            <person name="Shiekhattar R."/>
            <person name="Shilatifard A."/>
            <person name="Workman J."/>
            <person name="Zhang Y."/>
        </authorList>
    </citation>
    <scope>NOMENCLATURE</scope>
</reference>
<reference key="19">
    <citation type="journal article" date="2007" name="J. Proteome Res.">
        <title>Large-scale phosphorylation analysis of alpha-factor-arrested Saccharomyces cerevisiae.</title>
        <authorList>
            <person name="Li X."/>
            <person name="Gerber S.A."/>
            <person name="Rudner A.D."/>
            <person name="Beausoleil S.A."/>
            <person name="Haas W."/>
            <person name="Villen J."/>
            <person name="Elias J.E."/>
            <person name="Gygi S.P."/>
        </authorList>
    </citation>
    <scope>PHOSPHORYLATION [LARGE SCALE ANALYSIS] AT SER-625</scope>
    <scope>IDENTIFICATION BY MASS SPECTROMETRY [LARGE SCALE ANALYSIS]</scope>
    <source>
        <strain>ADR376</strain>
    </source>
</reference>
<reference key="20">
    <citation type="journal article" date="2009" name="Science">
        <title>Global analysis of Cdk1 substrate phosphorylation sites provides insights into evolution.</title>
        <authorList>
            <person name="Holt L.J."/>
            <person name="Tuch B.B."/>
            <person name="Villen J."/>
            <person name="Johnson A.D."/>
            <person name="Gygi S.P."/>
            <person name="Morgan D.O."/>
        </authorList>
    </citation>
    <scope>PHOSPHORYLATION [LARGE SCALE ANALYSIS] AT SER-625 AND THR-875</scope>
    <scope>IDENTIFICATION BY MASS SPECTROMETRY [LARGE SCALE ANALYSIS]</scope>
</reference>
<reference key="21">
    <citation type="journal article" date="2017" name="Cell Discov.">
        <title>Binding to RNA regulates Set1 function.</title>
        <authorList>
            <person name="Luciano P."/>
            <person name="Jeon J."/>
            <person name="El-Kaoutari A."/>
            <person name="Challal D."/>
            <person name="Bonnet A."/>
            <person name="Barucco M."/>
            <person name="Candelli T."/>
            <person name="Jourquin F."/>
            <person name="Lesage P."/>
            <person name="Kim J."/>
            <person name="Libri D."/>
            <person name="Geli V."/>
        </authorList>
    </citation>
    <scope>FUNCTION</scope>
    <scope>CATALYTIC ACTIVITY</scope>
    <scope>IDENTIFICATION IN THE SET1C/COMPASS COMPLEX</scope>
    <scope>SUBCELLULAR LOCATION</scope>
    <scope>DISRUPTION PHENOTYPE</scope>
    <scope>MUTAGENESIS OF 271-TYR-PHE-272</scope>
</reference>
<reference evidence="27" key="22">
    <citation type="journal article" date="2006" name="J. Mol. Biol.">
        <title>Structural characterization of Set1 RNA recognition motifs and their role in histone H3 lysine 4 methylation.</title>
        <authorList>
            <person name="Tresaugues L."/>
            <person name="Dehe P.M."/>
            <person name="Guerois R."/>
            <person name="Rodriguez-Gil A."/>
            <person name="Varlet I."/>
            <person name="Salah P."/>
            <person name="Pamblanco M."/>
            <person name="Luciano P."/>
            <person name="Quevillon-Cheruel S."/>
            <person name="Sollier J."/>
            <person name="Leulliot N."/>
            <person name="Couprie J."/>
            <person name="Tordera V."/>
            <person name="Zinn-Justin S."/>
            <person name="Chavez S."/>
            <person name="van Tilbeurgh H."/>
            <person name="Geli V."/>
        </authorList>
    </citation>
    <scope>X-RAY CRYSTALLOGRAPHY (3.00 ANGSTROMS) OF 247-375</scope>
    <scope>FUNCTION</scope>
    <scope>IDENTIFICATION IN THE SET1C/COMPASS COMPLEX</scope>
    <scope>MUTAGENESIS OF 271-TYR-PHE-272 AND HIS-422</scope>
</reference>
<reference evidence="28" key="23">
    <citation type="journal article" date="2020" name="Elife">
        <title>Structural basis for COMPASS recognition of an H2B-ubiquitinated nucleosome.</title>
        <authorList>
            <person name="Worden E.J."/>
            <person name="Zhang X."/>
            <person name="Wolberger C."/>
        </authorList>
    </citation>
    <scope>STRUCTURE BY ELECTRON MICROSCOPY (3.37 ANGSTROMS) OF 762-1080 WITHIN THE CORE COMPASS H2B-UBIQUITIN NUCLEOSOME COMPLEX</scope>
    <scope>SUBUNIT</scope>
    <scope>DOMAIN</scope>
    <scope>FUNCTION</scope>
</reference>
<feature type="chain" id="PRO_0000186086" description="Histone-lysine N-methyltransferase, H3 lysine-4 specific">
    <location>
        <begin position="1"/>
        <end position="1080"/>
    </location>
</feature>
<feature type="domain" description="SET" evidence="2">
    <location>
        <begin position="938"/>
        <end position="1055"/>
    </location>
</feature>
<feature type="domain" description="Post-SET" evidence="1">
    <location>
        <begin position="1064"/>
        <end position="1080"/>
    </location>
</feature>
<feature type="region of interest" description="Binds SWD2" evidence="18">
    <location>
        <begin position="1"/>
        <end position="230"/>
    </location>
</feature>
<feature type="region of interest" description="Disordered" evidence="3">
    <location>
        <begin position="1"/>
        <end position="46"/>
    </location>
</feature>
<feature type="region of interest" description="Disordered" evidence="3">
    <location>
        <begin position="54"/>
        <end position="73"/>
    </location>
</feature>
<feature type="region of interest" description="Disordered" evidence="3">
    <location>
        <begin position="78"/>
        <end position="121"/>
    </location>
</feature>
<feature type="region of interest" description="Binds RNA" evidence="16 18">
    <location>
        <begin position="230"/>
        <end position="569"/>
    </location>
</feature>
<feature type="region of interest" description="Binds SHG1" evidence="18">
    <location>
        <begin position="356"/>
        <end position="569"/>
    </location>
</feature>
<feature type="region of interest" description="Disordered" evidence="3">
    <location>
        <begin position="646"/>
        <end position="729"/>
    </location>
</feature>
<feature type="region of interest" description="Binds SPP1" evidence="18">
    <location>
        <begin position="762"/>
        <end position="938"/>
    </location>
</feature>
<feature type="region of interest" description="Contributes to RNA binding" evidence="18">
    <location>
        <begin position="762"/>
        <end position="938"/>
    </location>
</feature>
<feature type="region of interest" description="Required for catalytic activity" evidence="18">
    <location>
        <begin position="762"/>
        <end position="938"/>
    </location>
</feature>
<feature type="region of interest" description="Disordered" evidence="3">
    <location>
        <begin position="877"/>
        <end position="909"/>
    </location>
</feature>
<feature type="short sequence motif" description="RxxxRR motif" evidence="19 28">
    <location>
        <begin position="904"/>
        <end position="909"/>
    </location>
</feature>
<feature type="compositionally biased region" description="Polar residues" evidence="3">
    <location>
        <begin position="11"/>
        <end position="28"/>
    </location>
</feature>
<feature type="compositionally biased region" description="Low complexity" evidence="3">
    <location>
        <begin position="29"/>
        <end position="46"/>
    </location>
</feature>
<feature type="compositionally biased region" description="Basic and acidic residues" evidence="3">
    <location>
        <begin position="54"/>
        <end position="67"/>
    </location>
</feature>
<feature type="compositionally biased region" description="Polar residues" evidence="3">
    <location>
        <begin position="78"/>
        <end position="87"/>
    </location>
</feature>
<feature type="compositionally biased region" description="Polar residues" evidence="3">
    <location>
        <begin position="99"/>
        <end position="121"/>
    </location>
</feature>
<feature type="compositionally biased region" description="Acidic residues" evidence="3">
    <location>
        <begin position="674"/>
        <end position="692"/>
    </location>
</feature>
<feature type="compositionally biased region" description="Basic and acidic residues" evidence="3">
    <location>
        <begin position="693"/>
        <end position="712"/>
    </location>
</feature>
<feature type="compositionally biased region" description="Basic and acidic residues" evidence="3">
    <location>
        <begin position="877"/>
        <end position="890"/>
    </location>
</feature>
<feature type="compositionally biased region" description="Basic and acidic residues" evidence="3">
    <location>
        <begin position="899"/>
        <end position="909"/>
    </location>
</feature>
<feature type="binding site" evidence="2">
    <location>
        <position position="1054"/>
    </location>
    <ligand>
        <name>S-adenosyl-L-methionine</name>
        <dbReference type="ChEBI" id="CHEBI:59789"/>
    </ligand>
</feature>
<feature type="modified residue" description="Phosphoserine" evidence="29 30">
    <location>
        <position position="625"/>
    </location>
</feature>
<feature type="modified residue" description="Phosphothreonine" evidence="30">
    <location>
        <position position="875"/>
    </location>
</feature>
<feature type="mutagenesis site" description="Increases its histone methyltransferase activity. Strongly decreases binding to the majority of its RNA targets; binding to Ty1 retrotransposon mRNA is not affected. Decreases cellular H3K4me2/3 levels. Decreases occupancy of the protein in the 5' region of genes, and increases its occupancy in the 3'-end of genes. Decreases the level of SET1 protein in the cell. Does not affect the frequency of Ty1 retrotransposition." evidence="16 18">
    <original>YF</original>
    <variation>AA</variation>
    <location>
        <begin position="271"/>
        <end position="272"/>
    </location>
</feature>
<feature type="mutagenesis site" description="Strongly decreases RNA binding. Does not affect cellular H3K4me2/3 levels." evidence="16">
    <original>H</original>
    <variation>A</variation>
    <location>
        <position position="422"/>
    </location>
</feature>
<feature type="strand" evidence="31">
    <location>
        <begin position="249"/>
        <end position="258"/>
    </location>
</feature>
<feature type="helix" evidence="31">
    <location>
        <begin position="265"/>
        <end position="273"/>
    </location>
</feature>
<feature type="strand" evidence="31">
    <location>
        <begin position="279"/>
        <end position="285"/>
    </location>
</feature>
<feature type="turn" evidence="31">
    <location>
        <begin position="287"/>
        <end position="289"/>
    </location>
</feature>
<feature type="strand" evidence="31">
    <location>
        <begin position="292"/>
        <end position="299"/>
    </location>
</feature>
<feature type="helix" evidence="31">
    <location>
        <begin position="310"/>
        <end position="320"/>
    </location>
</feature>
<feature type="turn" evidence="31">
    <location>
        <begin position="321"/>
        <end position="324"/>
    </location>
</feature>
<feature type="strand" evidence="31">
    <location>
        <begin position="326"/>
        <end position="328"/>
    </location>
</feature>
<feature type="strand" evidence="31">
    <location>
        <begin position="331"/>
        <end position="337"/>
    </location>
</feature>
<feature type="helix" evidence="31">
    <location>
        <begin position="342"/>
        <end position="364"/>
    </location>
</feature>
<feature type="helix" evidence="32">
    <location>
        <begin position="804"/>
        <end position="824"/>
    </location>
</feature>
<feature type="strand" evidence="32">
    <location>
        <begin position="835"/>
        <end position="837"/>
    </location>
</feature>
<feature type="helix" evidence="32">
    <location>
        <begin position="900"/>
        <end position="917"/>
    </location>
</feature>
<feature type="helix" evidence="32">
    <location>
        <begin position="918"/>
        <end position="920"/>
    </location>
</feature>
<feature type="strand" evidence="32">
    <location>
        <begin position="940"/>
        <end position="944"/>
    </location>
</feature>
<feature type="strand" evidence="32">
    <location>
        <begin position="946"/>
        <end position="956"/>
    </location>
</feature>
<feature type="strand" evidence="32">
    <location>
        <begin position="963"/>
        <end position="966"/>
    </location>
</feature>
<feature type="strand" evidence="32">
    <location>
        <begin position="969"/>
        <end position="972"/>
    </location>
</feature>
<feature type="helix" evidence="32">
    <location>
        <begin position="974"/>
        <end position="986"/>
    </location>
</feature>
<feature type="strand" evidence="32">
    <location>
        <begin position="994"/>
        <end position="998"/>
    </location>
</feature>
<feature type="strand" evidence="32">
    <location>
        <begin position="1001"/>
        <end position="1009"/>
    </location>
</feature>
<feature type="helix" evidence="32">
    <location>
        <begin position="1011"/>
        <end position="1014"/>
    </location>
</feature>
<feature type="strand" evidence="32">
    <location>
        <begin position="1022"/>
        <end position="1030"/>
    </location>
</feature>
<feature type="strand" evidence="32">
    <location>
        <begin position="1033"/>
        <end position="1042"/>
    </location>
</feature>